<accession>P72174</accession>
<accession>P72147</accession>
<feature type="chain" id="PRO_0000138418" description="UvrABC system protein B">
    <location>
        <begin position="1"/>
        <end position="670"/>
    </location>
</feature>
<feature type="domain" description="Helicase ATP-binding" evidence="1">
    <location>
        <begin position="25"/>
        <end position="412"/>
    </location>
</feature>
<feature type="domain" description="Helicase C-terminal" evidence="1">
    <location>
        <begin position="429"/>
        <end position="582"/>
    </location>
</feature>
<feature type="domain" description="UVR" evidence="1">
    <location>
        <begin position="631"/>
        <end position="666"/>
    </location>
</feature>
<feature type="short sequence motif" description="Beta-hairpin">
    <location>
        <begin position="91"/>
        <end position="114"/>
    </location>
</feature>
<feature type="binding site" evidence="1">
    <location>
        <begin position="38"/>
        <end position="45"/>
    </location>
    <ligand>
        <name>ATP</name>
        <dbReference type="ChEBI" id="CHEBI:30616"/>
    </ligand>
</feature>
<feature type="sequence conflict" description="In Ref. 1; CAA63759." evidence="2" ref="1">
    <original>R</original>
    <variation>Q</variation>
    <location>
        <position position="173"/>
    </location>
</feature>
<feature type="sequence conflict" description="In Ref. 1; CAA63759." evidence="2" ref="1">
    <original>V</original>
    <variation>I</variation>
    <location>
        <position position="406"/>
    </location>
</feature>
<evidence type="ECO:0000255" key="1">
    <source>
        <dbReference type="HAMAP-Rule" id="MF_00204"/>
    </source>
</evidence>
<evidence type="ECO:0000305" key="2"/>
<keyword id="KW-0067">ATP-binding</keyword>
<keyword id="KW-0963">Cytoplasm</keyword>
<keyword id="KW-0227">DNA damage</keyword>
<keyword id="KW-0228">DNA excision</keyword>
<keyword id="KW-0234">DNA repair</keyword>
<keyword id="KW-0267">Excision nuclease</keyword>
<keyword id="KW-0547">Nucleotide-binding</keyword>
<keyword id="KW-1185">Reference proteome</keyword>
<keyword id="KW-0742">SOS response</keyword>
<protein>
    <recommendedName>
        <fullName evidence="1">UvrABC system protein B</fullName>
        <shortName evidence="1">Protein UvrB</shortName>
    </recommendedName>
    <alternativeName>
        <fullName evidence="1">Excinuclease ABC subunit B</fullName>
    </alternativeName>
</protein>
<reference key="1">
    <citation type="journal article" date="1996" name="J. Bacteriol.">
        <title>The uvrB gene of Pseudomonas aeruginosa is not DNA damage inducible.</title>
        <authorList>
            <person name="Rivera E."/>
            <person name="Vila L."/>
            <person name="Barbe J."/>
        </authorList>
    </citation>
    <scope>NUCLEOTIDE SEQUENCE [GENOMIC DNA]</scope>
    <source>
        <strain>ATCC 15692 / DSM 22644 / CIP 104116 / JCM 14847 / LMG 12228 / 1C / PRS 101 / PAO1</strain>
    </source>
</reference>
<reference key="2">
    <citation type="journal article" date="2000" name="Nature">
        <title>Complete genome sequence of Pseudomonas aeruginosa PAO1, an opportunistic pathogen.</title>
        <authorList>
            <person name="Stover C.K."/>
            <person name="Pham X.-Q.T."/>
            <person name="Erwin A.L."/>
            <person name="Mizoguchi S.D."/>
            <person name="Warrener P."/>
            <person name="Hickey M.J."/>
            <person name="Brinkman F.S.L."/>
            <person name="Hufnagle W.O."/>
            <person name="Kowalik D.J."/>
            <person name="Lagrou M."/>
            <person name="Garber R.L."/>
            <person name="Goltry L."/>
            <person name="Tolentino E."/>
            <person name="Westbrock-Wadman S."/>
            <person name="Yuan Y."/>
            <person name="Brody L.L."/>
            <person name="Coulter S.N."/>
            <person name="Folger K.R."/>
            <person name="Kas A."/>
            <person name="Larbig K."/>
            <person name="Lim R.M."/>
            <person name="Smith K.A."/>
            <person name="Spencer D.H."/>
            <person name="Wong G.K.-S."/>
            <person name="Wu Z."/>
            <person name="Paulsen I.T."/>
            <person name="Reizer J."/>
            <person name="Saier M.H. Jr."/>
            <person name="Hancock R.E.W."/>
            <person name="Lory S."/>
            <person name="Olson M.V."/>
        </authorList>
    </citation>
    <scope>NUCLEOTIDE SEQUENCE [LARGE SCALE GENOMIC DNA]</scope>
    <source>
        <strain>ATCC 15692 / DSM 22644 / CIP 104116 / JCM 14847 / LMG 12228 / 1C / PRS 101 / PAO1</strain>
    </source>
</reference>
<reference key="3">
    <citation type="journal article" date="1996" name="Mol. Microbiol.">
        <title>Molecular characterization of the Pseudomonas aeruginosa serotype O5 (PAO1) B-band lipopolysaccharide gene cluster.</title>
        <authorList>
            <person name="Burrows L.L."/>
            <person name="Charter D.F."/>
            <person name="Lam J.S."/>
        </authorList>
    </citation>
    <scope>NUCLEOTIDE SEQUENCE [GENOMIC DNA] OF 1-209</scope>
    <source>
        <strain>ATCC 15692 / DSM 22644 / CIP 104116 / JCM 14847 / LMG 12228 / 1C / PRS 101 / PAO1</strain>
    </source>
</reference>
<dbReference type="EMBL" id="X93486">
    <property type="protein sequence ID" value="CAA63759.1"/>
    <property type="molecule type" value="Genomic_DNA"/>
</dbReference>
<dbReference type="EMBL" id="AE004091">
    <property type="protein sequence ID" value="AAG06526.1"/>
    <property type="molecule type" value="Genomic_DNA"/>
</dbReference>
<dbReference type="EMBL" id="U50396">
    <property type="protein sequence ID" value="AAC45869.1"/>
    <property type="status" value="ALT_INIT"/>
    <property type="molecule type" value="Genomic_DNA"/>
</dbReference>
<dbReference type="PIR" id="A83255">
    <property type="entry name" value="A83255"/>
</dbReference>
<dbReference type="RefSeq" id="NP_251828.1">
    <property type="nucleotide sequence ID" value="NC_002516.2"/>
</dbReference>
<dbReference type="RefSeq" id="WP_003104590.1">
    <property type="nucleotide sequence ID" value="NZ_QZGE01000023.1"/>
</dbReference>
<dbReference type="SMR" id="P72174"/>
<dbReference type="FunCoup" id="P72174">
    <property type="interactions" value="223"/>
</dbReference>
<dbReference type="STRING" id="208964.PA3138"/>
<dbReference type="PaxDb" id="208964-PA3138"/>
<dbReference type="GeneID" id="882670"/>
<dbReference type="KEGG" id="pae:PA3138"/>
<dbReference type="PATRIC" id="fig|208964.12.peg.3290"/>
<dbReference type="PseudoCAP" id="PA3138"/>
<dbReference type="HOGENOM" id="CLU_009621_2_1_6"/>
<dbReference type="InParanoid" id="P72174"/>
<dbReference type="OrthoDB" id="9806651at2"/>
<dbReference type="PhylomeDB" id="P72174"/>
<dbReference type="BioCyc" id="PAER208964:G1FZ6-3198-MONOMER"/>
<dbReference type="Proteomes" id="UP000002438">
    <property type="component" value="Chromosome"/>
</dbReference>
<dbReference type="GO" id="GO:0005737">
    <property type="term" value="C:cytoplasm"/>
    <property type="evidence" value="ECO:0007669"/>
    <property type="project" value="UniProtKB-SubCell"/>
</dbReference>
<dbReference type="GO" id="GO:0009380">
    <property type="term" value="C:excinuclease repair complex"/>
    <property type="evidence" value="ECO:0000318"/>
    <property type="project" value="GO_Central"/>
</dbReference>
<dbReference type="GO" id="GO:0005524">
    <property type="term" value="F:ATP binding"/>
    <property type="evidence" value="ECO:0007669"/>
    <property type="project" value="UniProtKB-UniRule"/>
</dbReference>
<dbReference type="GO" id="GO:0016887">
    <property type="term" value="F:ATP hydrolysis activity"/>
    <property type="evidence" value="ECO:0007669"/>
    <property type="project" value="InterPro"/>
</dbReference>
<dbReference type="GO" id="GO:0003677">
    <property type="term" value="F:DNA binding"/>
    <property type="evidence" value="ECO:0007669"/>
    <property type="project" value="UniProtKB-UniRule"/>
</dbReference>
<dbReference type="GO" id="GO:0009381">
    <property type="term" value="F:excinuclease ABC activity"/>
    <property type="evidence" value="ECO:0007669"/>
    <property type="project" value="UniProtKB-UniRule"/>
</dbReference>
<dbReference type="GO" id="GO:0000715">
    <property type="term" value="P:nucleotide-excision repair, DNA damage recognition"/>
    <property type="evidence" value="ECO:0000318"/>
    <property type="project" value="GO_Central"/>
</dbReference>
<dbReference type="GO" id="GO:0009432">
    <property type="term" value="P:SOS response"/>
    <property type="evidence" value="ECO:0007669"/>
    <property type="project" value="UniProtKB-UniRule"/>
</dbReference>
<dbReference type="CDD" id="cd17916">
    <property type="entry name" value="DEXHc_UvrB"/>
    <property type="match status" value="1"/>
</dbReference>
<dbReference type="CDD" id="cd18790">
    <property type="entry name" value="SF2_C_UvrB"/>
    <property type="match status" value="1"/>
</dbReference>
<dbReference type="FunFam" id="3.40.50.300:FF:000477">
    <property type="entry name" value="UvrABC system protein B"/>
    <property type="match status" value="1"/>
</dbReference>
<dbReference type="Gene3D" id="6.10.140.240">
    <property type="match status" value="1"/>
</dbReference>
<dbReference type="Gene3D" id="3.40.50.300">
    <property type="entry name" value="P-loop containing nucleotide triphosphate hydrolases"/>
    <property type="match status" value="3"/>
</dbReference>
<dbReference type="Gene3D" id="4.10.860.10">
    <property type="entry name" value="UVR domain"/>
    <property type="match status" value="1"/>
</dbReference>
<dbReference type="HAMAP" id="MF_00204">
    <property type="entry name" value="UvrB"/>
    <property type="match status" value="1"/>
</dbReference>
<dbReference type="InterPro" id="IPR006935">
    <property type="entry name" value="Helicase/UvrB_N"/>
</dbReference>
<dbReference type="InterPro" id="IPR014001">
    <property type="entry name" value="Helicase_ATP-bd"/>
</dbReference>
<dbReference type="InterPro" id="IPR001650">
    <property type="entry name" value="Helicase_C-like"/>
</dbReference>
<dbReference type="InterPro" id="IPR027417">
    <property type="entry name" value="P-loop_NTPase"/>
</dbReference>
<dbReference type="InterPro" id="IPR001943">
    <property type="entry name" value="UVR_dom"/>
</dbReference>
<dbReference type="InterPro" id="IPR036876">
    <property type="entry name" value="UVR_dom_sf"/>
</dbReference>
<dbReference type="InterPro" id="IPR004807">
    <property type="entry name" value="UvrB"/>
</dbReference>
<dbReference type="InterPro" id="IPR041471">
    <property type="entry name" value="UvrB_inter"/>
</dbReference>
<dbReference type="InterPro" id="IPR024759">
    <property type="entry name" value="UvrB_YAD/RRR_dom"/>
</dbReference>
<dbReference type="NCBIfam" id="NF003673">
    <property type="entry name" value="PRK05298.1"/>
    <property type="match status" value="1"/>
</dbReference>
<dbReference type="NCBIfam" id="TIGR00631">
    <property type="entry name" value="uvrb"/>
    <property type="match status" value="1"/>
</dbReference>
<dbReference type="PANTHER" id="PTHR24029">
    <property type="entry name" value="UVRABC SYSTEM PROTEIN B"/>
    <property type="match status" value="1"/>
</dbReference>
<dbReference type="PANTHER" id="PTHR24029:SF0">
    <property type="entry name" value="UVRABC SYSTEM PROTEIN B"/>
    <property type="match status" value="1"/>
</dbReference>
<dbReference type="Pfam" id="PF00271">
    <property type="entry name" value="Helicase_C"/>
    <property type="match status" value="1"/>
</dbReference>
<dbReference type="Pfam" id="PF04851">
    <property type="entry name" value="ResIII"/>
    <property type="match status" value="1"/>
</dbReference>
<dbReference type="Pfam" id="PF02151">
    <property type="entry name" value="UVR"/>
    <property type="match status" value="1"/>
</dbReference>
<dbReference type="Pfam" id="PF12344">
    <property type="entry name" value="UvrB"/>
    <property type="match status" value="1"/>
</dbReference>
<dbReference type="Pfam" id="PF17757">
    <property type="entry name" value="UvrB_inter"/>
    <property type="match status" value="1"/>
</dbReference>
<dbReference type="SMART" id="SM00487">
    <property type="entry name" value="DEXDc"/>
    <property type="match status" value="1"/>
</dbReference>
<dbReference type="SMART" id="SM00490">
    <property type="entry name" value="HELICc"/>
    <property type="match status" value="1"/>
</dbReference>
<dbReference type="SUPFAM" id="SSF46600">
    <property type="entry name" value="C-terminal UvrC-binding domain of UvrB"/>
    <property type="match status" value="1"/>
</dbReference>
<dbReference type="SUPFAM" id="SSF52540">
    <property type="entry name" value="P-loop containing nucleoside triphosphate hydrolases"/>
    <property type="match status" value="2"/>
</dbReference>
<dbReference type="PROSITE" id="PS51192">
    <property type="entry name" value="HELICASE_ATP_BIND_1"/>
    <property type="match status" value="1"/>
</dbReference>
<dbReference type="PROSITE" id="PS51194">
    <property type="entry name" value="HELICASE_CTER"/>
    <property type="match status" value="1"/>
</dbReference>
<dbReference type="PROSITE" id="PS50151">
    <property type="entry name" value="UVR"/>
    <property type="match status" value="1"/>
</dbReference>
<comment type="function">
    <text evidence="1">The UvrABC repair system catalyzes the recognition and processing of DNA lesions. A damage recognition complex composed of 2 UvrA and 2 UvrB subunits scans DNA for abnormalities. Upon binding of the UvrA(2)B(2) complex to a putative damaged site, the DNA wraps around one UvrB monomer. DNA wrap is dependent on ATP binding by UvrB and probably causes local melting of the DNA helix, facilitating insertion of UvrB beta-hairpin between the DNA strands. Then UvrB probes one DNA strand for the presence of a lesion. If a lesion is found the UvrA subunits dissociate and the UvrB-DNA preincision complex is formed. This complex is subsequently bound by UvrC and the second UvrB is released. If no lesion is found, the DNA wraps around the other UvrB subunit that will check the other stand for damage.</text>
</comment>
<comment type="subunit">
    <text evidence="1">Forms a heterotetramer with UvrA during the search for lesions. Interacts with UvrC in an incision complex.</text>
</comment>
<comment type="subcellular location">
    <subcellularLocation>
        <location evidence="1">Cytoplasm</location>
    </subcellularLocation>
</comment>
<comment type="domain">
    <text evidence="1">The beta-hairpin motif is involved in DNA binding.</text>
</comment>
<comment type="similarity">
    <text evidence="1">Belongs to the UvrB family.</text>
</comment>
<comment type="sequence caution" evidence="2">
    <conflict type="erroneous initiation">
        <sequence resource="EMBL-CDS" id="AAC45869"/>
    </conflict>
</comment>
<gene>
    <name evidence="1" type="primary">uvrB</name>
    <name type="ordered locus">PA3138</name>
</gene>
<proteinExistence type="inferred from homology"/>
<name>UVRB_PSEAE</name>
<organism>
    <name type="scientific">Pseudomonas aeruginosa (strain ATCC 15692 / DSM 22644 / CIP 104116 / JCM 14847 / LMG 12228 / 1C / PRS 101 / PAO1)</name>
    <dbReference type="NCBI Taxonomy" id="208964"/>
    <lineage>
        <taxon>Bacteria</taxon>
        <taxon>Pseudomonadati</taxon>
        <taxon>Pseudomonadota</taxon>
        <taxon>Gammaproteobacteria</taxon>
        <taxon>Pseudomonadales</taxon>
        <taxon>Pseudomonadaceae</taxon>
        <taxon>Pseudomonas</taxon>
    </lineage>
</organism>
<sequence length="670" mass="76067">MDTFQLDSRFKPAGDQPEAIRQMVEGLEAGLSHQTLLGVTGSGKTFSIANVIAQVQRPTLVLAPNKTLAAQLYGEFKTFFPHNSVEYFVSYYDYYQPEAYVPSSDTYIEKDSSINDHIEQMRLSATKALLERPDAIIVATVSSIYGLGDPASYLKMVLHLDRGDRIDQRELLRRLTSLQYTRNDMDFARATFRVRGDVIDIFPAESDLEAIRVELFDDEVESLSAFDPLTGEVIRKLPRFTFYPKSHYVTPRETLLEAVDQIKAELKERLDYLRNNNKLVEAQRLEQRTRFDLEMILELGYCNGIENYSRYLSGRAPGEPPPTLYDYLPANSLLVIDESHVSVPQVGAMFKGDRSRKETLVEYGFRLPSALDNRPLRFEEWEAVSPQTIFVSATPGPYEAEHAGRVIEQVVRPTGLVDPEIEVRPAMTQVDDLLSQIRQRVAKDERVLVTTLTKRMAEDLTDYLGDHDVRVRYLHSDIDTVERVEIIRDLRAGAFDVLVGINLLREGLDMPEVSLVAILDADKEGFLRSERSLIQTIGRAARNLHGKAILYADNVTGSMQRAIDETERRRAKQIAFNEAHGIVPKGVRKDIKDILEGAVVPGARGKRKGVAKVAEESGRYENELRSPSEISKRIRQLEEKMYQLARDLEFEAAAQLRDEIQTLRERLVNV</sequence>